<keyword id="KW-0963">Cytoplasm</keyword>
<keyword id="KW-0489">Methyltransferase</keyword>
<keyword id="KW-1185">Reference proteome</keyword>
<keyword id="KW-0949">S-adenosyl-L-methionine</keyword>
<keyword id="KW-0808">Transferase</keyword>
<accession>O30199</accession>
<name>PIMT1_ARCFU</name>
<gene>
    <name type="primary">pcm1</name>
    <name type="ordered locus">AF_0036</name>
</gene>
<protein>
    <recommendedName>
        <fullName>Protein-L-isoaspartate O-methyltransferase 1</fullName>
        <ecNumber>2.1.1.77</ecNumber>
    </recommendedName>
    <alternativeName>
        <fullName>L-isoaspartyl protein carboxyl methyltransferase 1</fullName>
    </alternativeName>
    <alternativeName>
        <fullName>Protein L-isoaspartyl methyltransferase 1</fullName>
    </alternativeName>
    <alternativeName>
        <fullName>Protein-beta-aspartate methyltransferase 1</fullName>
        <shortName>PIMT 1</shortName>
    </alternativeName>
</protein>
<reference key="1">
    <citation type="journal article" date="1997" name="Nature">
        <title>The complete genome sequence of the hyperthermophilic, sulphate-reducing archaeon Archaeoglobus fulgidus.</title>
        <authorList>
            <person name="Klenk H.-P."/>
            <person name="Clayton R.A."/>
            <person name="Tomb J.-F."/>
            <person name="White O."/>
            <person name="Nelson K.E."/>
            <person name="Ketchum K.A."/>
            <person name="Dodson R.J."/>
            <person name="Gwinn M.L."/>
            <person name="Hickey E.K."/>
            <person name="Peterson J.D."/>
            <person name="Richardson D.L."/>
            <person name="Kerlavage A.R."/>
            <person name="Graham D.E."/>
            <person name="Kyrpides N.C."/>
            <person name="Fleischmann R.D."/>
            <person name="Quackenbush J."/>
            <person name="Lee N.H."/>
            <person name="Sutton G.G."/>
            <person name="Gill S.R."/>
            <person name="Kirkness E.F."/>
            <person name="Dougherty B.A."/>
            <person name="McKenney K."/>
            <person name="Adams M.D."/>
            <person name="Loftus B.J."/>
            <person name="Peterson S.N."/>
            <person name="Reich C.I."/>
            <person name="McNeil L.K."/>
            <person name="Badger J.H."/>
            <person name="Glodek A."/>
            <person name="Zhou L."/>
            <person name="Overbeek R."/>
            <person name="Gocayne J.D."/>
            <person name="Weidman J.F."/>
            <person name="McDonald L.A."/>
            <person name="Utterback T.R."/>
            <person name="Cotton M.D."/>
            <person name="Spriggs T."/>
            <person name="Artiach P."/>
            <person name="Kaine B.P."/>
            <person name="Sykes S.M."/>
            <person name="Sadow P.W."/>
            <person name="D'Andrea K.P."/>
            <person name="Bowman C."/>
            <person name="Fujii C."/>
            <person name="Garland S.A."/>
            <person name="Mason T.M."/>
            <person name="Olsen G.J."/>
            <person name="Fraser C.M."/>
            <person name="Smith H.O."/>
            <person name="Woese C.R."/>
            <person name="Venter J.C."/>
        </authorList>
    </citation>
    <scope>NUCLEOTIDE SEQUENCE [LARGE SCALE GENOMIC DNA]</scope>
    <source>
        <strain>ATCC 49558 / DSM 4304 / JCM 9628 / NBRC 100126 / VC-16</strain>
    </source>
</reference>
<feature type="chain" id="PRO_0000111912" description="Protein-L-isoaspartate O-methyltransferase 1">
    <location>
        <begin position="1"/>
        <end position="216"/>
    </location>
</feature>
<feature type="active site" evidence="1">
    <location>
        <position position="60"/>
    </location>
</feature>
<dbReference type="EC" id="2.1.1.77"/>
<dbReference type="EMBL" id="AE000782">
    <property type="protein sequence ID" value="AAB91197.1"/>
    <property type="molecule type" value="Genomic_DNA"/>
</dbReference>
<dbReference type="PIR" id="D69254">
    <property type="entry name" value="D69254"/>
</dbReference>
<dbReference type="RefSeq" id="WP_010877550.1">
    <property type="nucleotide sequence ID" value="NC_000917.1"/>
</dbReference>
<dbReference type="SMR" id="O30199"/>
<dbReference type="STRING" id="224325.AF_0036"/>
<dbReference type="PaxDb" id="224325-AF_0036"/>
<dbReference type="EnsemblBacteria" id="AAB91197">
    <property type="protein sequence ID" value="AAB91197"/>
    <property type="gene ID" value="AF_0036"/>
</dbReference>
<dbReference type="GeneID" id="1483246"/>
<dbReference type="KEGG" id="afu:AF_0036"/>
<dbReference type="eggNOG" id="arCOG00976">
    <property type="taxonomic scope" value="Archaea"/>
</dbReference>
<dbReference type="HOGENOM" id="CLU_055432_2_0_2"/>
<dbReference type="OrthoDB" id="33618at2157"/>
<dbReference type="PhylomeDB" id="O30199"/>
<dbReference type="Proteomes" id="UP000002199">
    <property type="component" value="Chromosome"/>
</dbReference>
<dbReference type="GO" id="GO:0005737">
    <property type="term" value="C:cytoplasm"/>
    <property type="evidence" value="ECO:0007669"/>
    <property type="project" value="UniProtKB-SubCell"/>
</dbReference>
<dbReference type="GO" id="GO:0004719">
    <property type="term" value="F:protein-L-isoaspartate (D-aspartate) O-methyltransferase activity"/>
    <property type="evidence" value="ECO:0007669"/>
    <property type="project" value="UniProtKB-UniRule"/>
</dbReference>
<dbReference type="GO" id="GO:0032259">
    <property type="term" value="P:methylation"/>
    <property type="evidence" value="ECO:0007669"/>
    <property type="project" value="UniProtKB-KW"/>
</dbReference>
<dbReference type="GO" id="GO:0036211">
    <property type="term" value="P:protein modification process"/>
    <property type="evidence" value="ECO:0007669"/>
    <property type="project" value="UniProtKB-UniRule"/>
</dbReference>
<dbReference type="GO" id="GO:0030091">
    <property type="term" value="P:protein repair"/>
    <property type="evidence" value="ECO:0007669"/>
    <property type="project" value="UniProtKB-UniRule"/>
</dbReference>
<dbReference type="CDD" id="cd02440">
    <property type="entry name" value="AdoMet_MTases"/>
    <property type="match status" value="1"/>
</dbReference>
<dbReference type="FunFam" id="3.40.50.150:FF:000010">
    <property type="entry name" value="Protein-L-isoaspartate O-methyltransferase"/>
    <property type="match status" value="1"/>
</dbReference>
<dbReference type="Gene3D" id="3.40.50.150">
    <property type="entry name" value="Vaccinia Virus protein VP39"/>
    <property type="match status" value="1"/>
</dbReference>
<dbReference type="HAMAP" id="MF_00090">
    <property type="entry name" value="PIMT"/>
    <property type="match status" value="1"/>
</dbReference>
<dbReference type="InterPro" id="IPR000682">
    <property type="entry name" value="PCMT"/>
</dbReference>
<dbReference type="InterPro" id="IPR029063">
    <property type="entry name" value="SAM-dependent_MTases_sf"/>
</dbReference>
<dbReference type="NCBIfam" id="TIGR00080">
    <property type="entry name" value="pimt"/>
    <property type="match status" value="1"/>
</dbReference>
<dbReference type="NCBIfam" id="NF001453">
    <property type="entry name" value="PRK00312.1"/>
    <property type="match status" value="1"/>
</dbReference>
<dbReference type="NCBIfam" id="NF010549">
    <property type="entry name" value="PRK13942.1"/>
    <property type="match status" value="1"/>
</dbReference>
<dbReference type="PANTHER" id="PTHR11579">
    <property type="entry name" value="PROTEIN-L-ISOASPARTATE O-METHYLTRANSFERASE"/>
    <property type="match status" value="1"/>
</dbReference>
<dbReference type="PANTHER" id="PTHR11579:SF0">
    <property type="entry name" value="PROTEIN-L-ISOASPARTATE(D-ASPARTATE) O-METHYLTRANSFERASE"/>
    <property type="match status" value="1"/>
</dbReference>
<dbReference type="Pfam" id="PF01135">
    <property type="entry name" value="PCMT"/>
    <property type="match status" value="1"/>
</dbReference>
<dbReference type="SUPFAM" id="SSF53335">
    <property type="entry name" value="S-adenosyl-L-methionine-dependent methyltransferases"/>
    <property type="match status" value="1"/>
</dbReference>
<dbReference type="PROSITE" id="PS01279">
    <property type="entry name" value="PCMT"/>
    <property type="match status" value="1"/>
</dbReference>
<comment type="function">
    <text evidence="1">Catalyzes the methyl esterification of L-isoaspartyl residues in peptides and proteins that result from spontaneous decomposition of normal L-aspartyl and L-asparaginyl residues. It plays a role in the repair and/or degradation of damaged proteins (By similarity).</text>
</comment>
<comment type="catalytic activity">
    <reaction>
        <text>[protein]-L-isoaspartate + S-adenosyl-L-methionine = [protein]-L-isoaspartate alpha-methyl ester + S-adenosyl-L-homocysteine</text>
        <dbReference type="Rhea" id="RHEA:12705"/>
        <dbReference type="Rhea" id="RHEA-COMP:12143"/>
        <dbReference type="Rhea" id="RHEA-COMP:12144"/>
        <dbReference type="ChEBI" id="CHEBI:57856"/>
        <dbReference type="ChEBI" id="CHEBI:59789"/>
        <dbReference type="ChEBI" id="CHEBI:90596"/>
        <dbReference type="ChEBI" id="CHEBI:90598"/>
        <dbReference type="EC" id="2.1.1.77"/>
    </reaction>
</comment>
<comment type="subcellular location">
    <subcellularLocation>
        <location evidence="1">Cytoplasm</location>
    </subcellularLocation>
</comment>
<comment type="similarity">
    <text evidence="2">Belongs to the methyltransferase superfamily. L-isoaspartyl/D-aspartyl protein methyltransferase family.</text>
</comment>
<organism>
    <name type="scientific">Archaeoglobus fulgidus (strain ATCC 49558 / DSM 4304 / JCM 9628 / NBRC 100126 / VC-16)</name>
    <dbReference type="NCBI Taxonomy" id="224325"/>
    <lineage>
        <taxon>Archaea</taxon>
        <taxon>Methanobacteriati</taxon>
        <taxon>Methanobacteriota</taxon>
        <taxon>Archaeoglobi</taxon>
        <taxon>Archaeoglobales</taxon>
        <taxon>Archaeoglobaceae</taxon>
        <taxon>Archaeoglobus</taxon>
    </lineage>
</organism>
<proteinExistence type="inferred from homology"/>
<sequence length="216" mass="24282">MDFDEKRRILAERLRDELNLSEKVYNAIKKVPRHLFVPERYRTMAYVDTPLPIGYGQTISAPHMVAIMCELLDLREGERVLEIGTGCGYHAAVTAEIVGKRGLVVSVERIPELAEIAKRNLSALGYENVVVIVGDGSLGYEPMAPYDKIYVTASAPDIPKPLLEQLKIGGKMVIPIGETTQFLYVVERDNGVRKWSWGAVRFVPLYGKYGFRPLEE</sequence>
<evidence type="ECO:0000250" key="1"/>
<evidence type="ECO:0000305" key="2"/>